<evidence type="ECO:0000255" key="1">
    <source>
        <dbReference type="HAMAP-Rule" id="MF_01668"/>
    </source>
</evidence>
<evidence type="ECO:0000305" key="2"/>
<reference key="1">
    <citation type="journal article" date="2004" name="J. Bacteriol.">
        <title>The genome sequence of Mycoplasma hyopneumoniae strain 232, the agent of swine mycoplasmosis.</title>
        <authorList>
            <person name="Minion F.C."/>
            <person name="Lefkowitz E.J."/>
            <person name="Madsen M.L."/>
            <person name="Cleary B.J."/>
            <person name="Swartzell S.M."/>
            <person name="Mahairas G.G."/>
        </authorList>
    </citation>
    <scope>NUCLEOTIDE SEQUENCE [LARGE SCALE GENOMIC DNA]</scope>
    <source>
        <strain>232</strain>
    </source>
</reference>
<organism>
    <name type="scientific">Mesomycoplasma hyopneumoniae (strain 232)</name>
    <name type="common">Mycoplasma hyopneumoniae</name>
    <dbReference type="NCBI Taxonomy" id="295358"/>
    <lineage>
        <taxon>Bacteria</taxon>
        <taxon>Bacillati</taxon>
        <taxon>Mycoplasmatota</taxon>
        <taxon>Mycoplasmoidales</taxon>
        <taxon>Metamycoplasmataceae</taxon>
        <taxon>Mesomycoplasma</taxon>
    </lineage>
</organism>
<dbReference type="EC" id="2.7.1.92" evidence="1"/>
<dbReference type="EMBL" id="AE017332">
    <property type="protein sequence ID" value="AAV27744.1"/>
    <property type="status" value="ALT_INIT"/>
    <property type="molecule type" value="Genomic_DNA"/>
</dbReference>
<dbReference type="RefSeq" id="WP_044284777.1">
    <property type="nucleotide sequence ID" value="NC_006360.1"/>
</dbReference>
<dbReference type="SMR" id="Q601P9"/>
<dbReference type="KEGG" id="mhy:mhp152"/>
<dbReference type="eggNOG" id="COG0524">
    <property type="taxonomic scope" value="Bacteria"/>
</dbReference>
<dbReference type="HOGENOM" id="CLU_027634_6_0_14"/>
<dbReference type="UniPathway" id="UPA00076">
    <property type="reaction ID" value="UER00146"/>
</dbReference>
<dbReference type="Proteomes" id="UP000006822">
    <property type="component" value="Chromosome"/>
</dbReference>
<dbReference type="GO" id="GO:0047590">
    <property type="term" value="F:5-dehydro-2-deoxygluconokinase activity"/>
    <property type="evidence" value="ECO:0007669"/>
    <property type="project" value="UniProtKB-EC"/>
</dbReference>
<dbReference type="GO" id="GO:0005524">
    <property type="term" value="F:ATP binding"/>
    <property type="evidence" value="ECO:0007669"/>
    <property type="project" value="UniProtKB-KW"/>
</dbReference>
<dbReference type="CDD" id="cd01166">
    <property type="entry name" value="KdgK"/>
    <property type="match status" value="1"/>
</dbReference>
<dbReference type="Gene3D" id="3.40.1190.20">
    <property type="match status" value="1"/>
</dbReference>
<dbReference type="Gene3D" id="2.20.150.10">
    <property type="entry name" value="putative 5-dehydro-2- deoxygluconokinase"/>
    <property type="match status" value="1"/>
</dbReference>
<dbReference type="HAMAP" id="MF_01668">
    <property type="entry name" value="IolC"/>
    <property type="match status" value="1"/>
</dbReference>
<dbReference type="InterPro" id="IPR022841">
    <property type="entry name" value="DKG_kinase_firmi"/>
</dbReference>
<dbReference type="InterPro" id="IPR030830">
    <property type="entry name" value="Myo_inos_IolC"/>
</dbReference>
<dbReference type="InterPro" id="IPR023314">
    <property type="entry name" value="Myo_inos_IolC-like_sf"/>
</dbReference>
<dbReference type="InterPro" id="IPR050306">
    <property type="entry name" value="PfkB_Carbo_kinase"/>
</dbReference>
<dbReference type="InterPro" id="IPR011611">
    <property type="entry name" value="PfkB_dom"/>
</dbReference>
<dbReference type="InterPro" id="IPR029056">
    <property type="entry name" value="Ribokinase-like"/>
</dbReference>
<dbReference type="NCBIfam" id="TIGR04382">
    <property type="entry name" value="myo_inos_iolC_N"/>
    <property type="match status" value="1"/>
</dbReference>
<dbReference type="PANTHER" id="PTHR43085:SF49">
    <property type="entry name" value="5-DEHYDRO-2-DEOXYGLUCONOKINASE"/>
    <property type="match status" value="1"/>
</dbReference>
<dbReference type="PANTHER" id="PTHR43085">
    <property type="entry name" value="HEXOKINASE FAMILY MEMBER"/>
    <property type="match status" value="1"/>
</dbReference>
<dbReference type="Pfam" id="PF00294">
    <property type="entry name" value="PfkB"/>
    <property type="match status" value="1"/>
</dbReference>
<dbReference type="SUPFAM" id="SSF53613">
    <property type="entry name" value="Ribokinase-like"/>
    <property type="match status" value="1"/>
</dbReference>
<keyword id="KW-0067">ATP-binding</keyword>
<keyword id="KW-0418">Kinase</keyword>
<keyword id="KW-0547">Nucleotide-binding</keyword>
<keyword id="KW-0808">Transferase</keyword>
<proteinExistence type="inferred from homology"/>
<protein>
    <recommendedName>
        <fullName evidence="1">5-dehydro-2-deoxygluconokinase</fullName>
        <ecNumber evidence="1">2.7.1.92</ecNumber>
    </recommendedName>
    <alternativeName>
        <fullName evidence="1">2-deoxy-5-keto-D-gluconate kinase</fullName>
        <shortName evidence="1">DKG kinase</shortName>
    </alternativeName>
</protein>
<gene>
    <name evidence="1" type="primary">iolC</name>
    <name type="ordered locus">mhp152</name>
</gene>
<comment type="function">
    <text evidence="1">Catalyzes the phosphorylation of 5-dehydro-2-deoxy-D-gluconate (2-deoxy-5-keto-D-gluconate or DKG) to 6-phospho-5-dehydro-2-deoxy-D-gluconate (DKGP).</text>
</comment>
<comment type="catalytic activity">
    <reaction evidence="1">
        <text>5-dehydro-2-deoxy-D-gluconate + ATP = 6-phospho-5-dehydro-2-deoxy-D-gluconate + ADP + H(+)</text>
        <dbReference type="Rhea" id="RHEA:13497"/>
        <dbReference type="ChEBI" id="CHEBI:15378"/>
        <dbReference type="ChEBI" id="CHEBI:16669"/>
        <dbReference type="ChEBI" id="CHEBI:30616"/>
        <dbReference type="ChEBI" id="CHEBI:57949"/>
        <dbReference type="ChEBI" id="CHEBI:456216"/>
        <dbReference type="EC" id="2.7.1.92"/>
    </reaction>
</comment>
<comment type="pathway">
    <text evidence="1">Polyol metabolism; myo-inositol degradation into acetyl-CoA; acetyl-CoA from myo-inositol: step 5/7.</text>
</comment>
<comment type="similarity">
    <text evidence="1">Belongs to the carbohydrate kinase PfkB family.</text>
</comment>
<comment type="sequence caution" evidence="2">
    <conflict type="erroneous initiation">
        <sequence resource="EMBL-CDS" id="AAV27744"/>
    </conflict>
</comment>
<name>IOLC_MESH2</name>
<accession>Q601P9</accession>
<sequence>MKKEFDFILIGRITIDFNPMDYYNNLENSSLFKKYIGGSAANIAIGLSRLKNKVGFFGSVSDDQFGNFVLNVFEKEKIDISHIKKTKDHKLGLTFTEMLSEEKSTILMYRDNVADLQIDVSDIDLDYILRTKILVISGTSLAKSPSREAVLKALFLAKNNGIKVVFDIDYRPYSWKNLDEVSLYYQIVAQNSDLIIGSYEEIQLTSRFCLENPENLIDDDYAKYWLKFVDLIIIKNGKKGSKLYQKDKKLVAKVVPVKMLKGYGGGDAYASLFLDHYLKNESDLENGLALATSAASIMVQSHSSFDLPDYQKILEFKDNALKSDPDLVQKKEWNAFKK</sequence>
<feature type="chain" id="PRO_0000352305" description="5-dehydro-2-deoxygluconokinase">
    <location>
        <begin position="1"/>
        <end position="338"/>
    </location>
</feature>